<dbReference type="EC" id="2.6.1.9" evidence="1"/>
<dbReference type="EMBL" id="CP000255">
    <property type="protein sequence ID" value="ABD22269.1"/>
    <property type="molecule type" value="Genomic_DNA"/>
</dbReference>
<dbReference type="RefSeq" id="WP_000663030.1">
    <property type="nucleotide sequence ID" value="NZ_CP027476.1"/>
</dbReference>
<dbReference type="SMR" id="Q2FIR7"/>
<dbReference type="KEGG" id="saa:SAUSA300_0708"/>
<dbReference type="HOGENOM" id="CLU_017584_3_3_9"/>
<dbReference type="OMA" id="FAIAHEP"/>
<dbReference type="UniPathway" id="UPA00031">
    <property type="reaction ID" value="UER00012"/>
</dbReference>
<dbReference type="Proteomes" id="UP000001939">
    <property type="component" value="Chromosome"/>
</dbReference>
<dbReference type="GO" id="GO:0004400">
    <property type="term" value="F:histidinol-phosphate transaminase activity"/>
    <property type="evidence" value="ECO:0007669"/>
    <property type="project" value="UniProtKB-UniRule"/>
</dbReference>
<dbReference type="GO" id="GO:0030170">
    <property type="term" value="F:pyridoxal phosphate binding"/>
    <property type="evidence" value="ECO:0007669"/>
    <property type="project" value="InterPro"/>
</dbReference>
<dbReference type="GO" id="GO:0000105">
    <property type="term" value="P:L-histidine biosynthetic process"/>
    <property type="evidence" value="ECO:0007669"/>
    <property type="project" value="UniProtKB-UniRule"/>
</dbReference>
<dbReference type="CDD" id="cd00609">
    <property type="entry name" value="AAT_like"/>
    <property type="match status" value="1"/>
</dbReference>
<dbReference type="Gene3D" id="3.90.1150.10">
    <property type="entry name" value="Aspartate Aminotransferase, domain 1"/>
    <property type="match status" value="1"/>
</dbReference>
<dbReference type="Gene3D" id="3.40.640.10">
    <property type="entry name" value="Type I PLP-dependent aspartate aminotransferase-like (Major domain)"/>
    <property type="match status" value="1"/>
</dbReference>
<dbReference type="HAMAP" id="MF_01023">
    <property type="entry name" value="HisC_aminotrans_2"/>
    <property type="match status" value="1"/>
</dbReference>
<dbReference type="InterPro" id="IPR001917">
    <property type="entry name" value="Aminotrans_II_pyridoxalP_BS"/>
</dbReference>
<dbReference type="InterPro" id="IPR004839">
    <property type="entry name" value="Aminotransferase_I/II_large"/>
</dbReference>
<dbReference type="InterPro" id="IPR005861">
    <property type="entry name" value="HisP_aminotrans"/>
</dbReference>
<dbReference type="InterPro" id="IPR050106">
    <property type="entry name" value="HistidinolP_aminotransfase"/>
</dbReference>
<dbReference type="InterPro" id="IPR015424">
    <property type="entry name" value="PyrdxlP-dep_Trfase"/>
</dbReference>
<dbReference type="InterPro" id="IPR015421">
    <property type="entry name" value="PyrdxlP-dep_Trfase_major"/>
</dbReference>
<dbReference type="InterPro" id="IPR015422">
    <property type="entry name" value="PyrdxlP-dep_Trfase_small"/>
</dbReference>
<dbReference type="NCBIfam" id="TIGR01141">
    <property type="entry name" value="hisC"/>
    <property type="match status" value="1"/>
</dbReference>
<dbReference type="PANTHER" id="PTHR43643:SF3">
    <property type="entry name" value="HISTIDINOL-PHOSPHATE AMINOTRANSFERASE"/>
    <property type="match status" value="1"/>
</dbReference>
<dbReference type="PANTHER" id="PTHR43643">
    <property type="entry name" value="HISTIDINOL-PHOSPHATE AMINOTRANSFERASE 2"/>
    <property type="match status" value="1"/>
</dbReference>
<dbReference type="Pfam" id="PF00155">
    <property type="entry name" value="Aminotran_1_2"/>
    <property type="match status" value="1"/>
</dbReference>
<dbReference type="SUPFAM" id="SSF53383">
    <property type="entry name" value="PLP-dependent transferases"/>
    <property type="match status" value="1"/>
</dbReference>
<dbReference type="PROSITE" id="PS00599">
    <property type="entry name" value="AA_TRANSFER_CLASS_2"/>
    <property type="match status" value="1"/>
</dbReference>
<name>HIS8_STAA3</name>
<comment type="catalytic activity">
    <reaction evidence="1">
        <text>L-histidinol phosphate + 2-oxoglutarate = 3-(imidazol-4-yl)-2-oxopropyl phosphate + L-glutamate</text>
        <dbReference type="Rhea" id="RHEA:23744"/>
        <dbReference type="ChEBI" id="CHEBI:16810"/>
        <dbReference type="ChEBI" id="CHEBI:29985"/>
        <dbReference type="ChEBI" id="CHEBI:57766"/>
        <dbReference type="ChEBI" id="CHEBI:57980"/>
        <dbReference type="EC" id="2.6.1.9"/>
    </reaction>
</comment>
<comment type="cofactor">
    <cofactor evidence="1">
        <name>pyridoxal 5'-phosphate</name>
        <dbReference type="ChEBI" id="CHEBI:597326"/>
    </cofactor>
</comment>
<comment type="pathway">
    <text evidence="1">Amino-acid biosynthesis; L-histidine biosynthesis; L-histidine from 5-phospho-alpha-D-ribose 1-diphosphate: step 7/9.</text>
</comment>
<comment type="subunit">
    <text evidence="1">Homodimer.</text>
</comment>
<comment type="similarity">
    <text evidence="1">Belongs to the class-II pyridoxal-phosphate-dependent aminotransferase family. Histidinol-phosphate aminotransferase subfamily.</text>
</comment>
<keyword id="KW-0028">Amino-acid biosynthesis</keyword>
<keyword id="KW-0032">Aminotransferase</keyword>
<keyword id="KW-0368">Histidine biosynthesis</keyword>
<keyword id="KW-0663">Pyridoxal phosphate</keyword>
<keyword id="KW-0808">Transferase</keyword>
<evidence type="ECO:0000255" key="1">
    <source>
        <dbReference type="HAMAP-Rule" id="MF_01023"/>
    </source>
</evidence>
<sequence>MKEQLNQLSAYQPGLSPRALKEKYGIEGDLYKLASNENLYGPSPKVKEAISAHLDELYYYPETGSPTLKAAISKHLNVDQSRILFGAGLDEVILMISRAVLTPGDTIVTSEATFGQYYHNAIVESANVIQVPLKDGGFDLEGILKEVNEDTSLVWLCNPNNPTGTYFNHESLDSFLSQVPPHVPVIIDEAYFEFVTAEDYPDTLALQQKYDNAFLLRTFSKAYGLAGLRVGYVVASEHAIEKWNIIRPPFNVTRISEYAAVAALEDQQYLKEVTHKNSVERERFYQLPQSEYFLPSQTNFIFVKTKRVNELYEALLNVGCITRPFPTGVRITIGFKEQNDKMLEVLSNFKYE</sequence>
<feature type="chain" id="PRO_1000063504" description="Histidinol-phosphate aminotransferase">
    <location>
        <begin position="1"/>
        <end position="352"/>
    </location>
</feature>
<feature type="modified residue" description="N6-(pyridoxal phosphate)lysine" evidence="1">
    <location>
        <position position="221"/>
    </location>
</feature>
<reference key="1">
    <citation type="journal article" date="2006" name="Lancet">
        <title>Complete genome sequence of USA300, an epidemic clone of community-acquired meticillin-resistant Staphylococcus aureus.</title>
        <authorList>
            <person name="Diep B.A."/>
            <person name="Gill S.R."/>
            <person name="Chang R.F."/>
            <person name="Phan T.H."/>
            <person name="Chen J.H."/>
            <person name="Davidson M.G."/>
            <person name="Lin F."/>
            <person name="Lin J."/>
            <person name="Carleton H.A."/>
            <person name="Mongodin E.F."/>
            <person name="Sensabaugh G.F."/>
            <person name="Perdreau-Remington F."/>
        </authorList>
    </citation>
    <scope>NUCLEOTIDE SEQUENCE [LARGE SCALE GENOMIC DNA]</scope>
    <source>
        <strain>USA300</strain>
    </source>
</reference>
<organism>
    <name type="scientific">Staphylococcus aureus (strain USA300)</name>
    <dbReference type="NCBI Taxonomy" id="367830"/>
    <lineage>
        <taxon>Bacteria</taxon>
        <taxon>Bacillati</taxon>
        <taxon>Bacillota</taxon>
        <taxon>Bacilli</taxon>
        <taxon>Bacillales</taxon>
        <taxon>Staphylococcaceae</taxon>
        <taxon>Staphylococcus</taxon>
    </lineage>
</organism>
<accession>Q2FIR7</accession>
<gene>
    <name evidence="1" type="primary">hisC</name>
    <name type="ordered locus">SAUSA300_0708</name>
</gene>
<protein>
    <recommendedName>
        <fullName evidence="1">Histidinol-phosphate aminotransferase</fullName>
        <ecNumber evidence="1">2.6.1.9</ecNumber>
    </recommendedName>
    <alternativeName>
        <fullName evidence="1">Imidazole acetol-phosphate transaminase</fullName>
    </alternativeName>
</protein>
<proteinExistence type="inferred from homology"/>